<name>YSOA_BACSU</name>
<comment type="sequence caution" evidence="1">
    <conflict type="erroneous initiation">
        <sequence resource="EMBL-CDS" id="CAA99535"/>
    </conflict>
</comment>
<evidence type="ECO:0000305" key="1"/>
<feature type="chain" id="PRO_0000360703" description="TPR repeat-containing protein YsoA">
    <location>
        <begin position="1"/>
        <end position="334"/>
    </location>
</feature>
<feature type="repeat" description="TPR 1">
    <location>
        <begin position="17"/>
        <end position="50"/>
    </location>
</feature>
<feature type="repeat" description="TPR 2">
    <location>
        <begin position="52"/>
        <end position="84"/>
    </location>
</feature>
<feature type="repeat" description="TPR 3">
    <location>
        <begin position="195"/>
        <end position="230"/>
    </location>
</feature>
<feature type="sequence conflict" description="In Ref. 1; CAA99535." evidence="1" ref="1">
    <original>I</original>
    <variation>V</variation>
    <location>
        <position position="231"/>
    </location>
</feature>
<feature type="sequence conflict" description="In Ref. 1; CAA99535." evidence="1" ref="1">
    <original>V</original>
    <variation>A</variation>
    <location>
        <position position="246"/>
    </location>
</feature>
<feature type="sequence conflict" description="In Ref. 1; CAA99535." evidence="1" ref="1">
    <original>P</original>
    <variation>S</variation>
    <location>
        <position position="256"/>
    </location>
</feature>
<accession>P94569</accession>
<accession>Q795Y0</accession>
<gene>
    <name type="primary">ysoA</name>
    <name type="ordered locus">BSU28240</name>
</gene>
<keyword id="KW-1185">Reference proteome</keyword>
<keyword id="KW-0677">Repeat</keyword>
<keyword id="KW-0802">TPR repeat</keyword>
<sequence length="334" mass="38706">MTHDKKNAKIIPFPHLKDRLVEKGMSSLKEKKYQEALELFSEAMKYDDTESDLHLGMAICFLELGELEEAESVCEKMLKEGYGHYFTVLQVYMTILIQLKKYEEVKSTIEAVLEENQLPAESAEQFYKLLDFSRKMTDPDREDEAWAEEYEDTIDTEKVLASPEEQMNLIHSLKDRNVAKYTGLLKTILQDPSAHPIIKTMIVMLLAEHEYSKPVHISKFGESLTIEPSEIVPPDAAPILHRVLRVLDETLGNENPTLYAAVEELWRRHLYVLYPFQPKLLSADLWAAALHKVGYEMHGIEIESEELHMMYEFTDRELDEACTMLKDIEEISYL</sequence>
<dbReference type="EMBL" id="Z75208">
    <property type="protein sequence ID" value="CAA99535.1"/>
    <property type="status" value="ALT_INIT"/>
    <property type="molecule type" value="Genomic_DNA"/>
</dbReference>
<dbReference type="EMBL" id="AL009126">
    <property type="protein sequence ID" value="CAB14784.2"/>
    <property type="molecule type" value="Genomic_DNA"/>
</dbReference>
<dbReference type="PIR" id="H69986">
    <property type="entry name" value="H69986"/>
</dbReference>
<dbReference type="RefSeq" id="NP_390702.2">
    <property type="nucleotide sequence ID" value="NC_000964.3"/>
</dbReference>
<dbReference type="RefSeq" id="WP_003229609.1">
    <property type="nucleotide sequence ID" value="NZ_OZ025638.1"/>
</dbReference>
<dbReference type="SMR" id="P94569"/>
<dbReference type="FunCoup" id="P94569">
    <property type="interactions" value="3"/>
</dbReference>
<dbReference type="STRING" id="224308.BSU28240"/>
<dbReference type="PaxDb" id="224308-BSU28240"/>
<dbReference type="EnsemblBacteria" id="CAB14784">
    <property type="protein sequence ID" value="CAB14784"/>
    <property type="gene ID" value="BSU_28240"/>
</dbReference>
<dbReference type="GeneID" id="937479"/>
<dbReference type="KEGG" id="bsu:BSU28240"/>
<dbReference type="PATRIC" id="fig|224308.179.peg.3067"/>
<dbReference type="eggNOG" id="COG0457">
    <property type="taxonomic scope" value="Bacteria"/>
</dbReference>
<dbReference type="eggNOG" id="COG1477">
    <property type="taxonomic scope" value="Bacteria"/>
</dbReference>
<dbReference type="InParanoid" id="P94569"/>
<dbReference type="OrthoDB" id="2364593at2"/>
<dbReference type="BioCyc" id="BSUB:BSU28240-MONOMER"/>
<dbReference type="Proteomes" id="UP000001570">
    <property type="component" value="Chromosome"/>
</dbReference>
<dbReference type="Gene3D" id="1.25.40.10">
    <property type="entry name" value="Tetratricopeptide repeat domain"/>
    <property type="match status" value="1"/>
</dbReference>
<dbReference type="InterPro" id="IPR011990">
    <property type="entry name" value="TPR-like_helical_dom_sf"/>
</dbReference>
<dbReference type="InterPro" id="IPR019734">
    <property type="entry name" value="TPR_rpt"/>
</dbReference>
<dbReference type="Pfam" id="PF14559">
    <property type="entry name" value="TPR_19"/>
    <property type="match status" value="1"/>
</dbReference>
<dbReference type="SUPFAM" id="SSF116965">
    <property type="entry name" value="Hypothetical protein MPN330"/>
    <property type="match status" value="1"/>
</dbReference>
<dbReference type="SUPFAM" id="SSF48452">
    <property type="entry name" value="TPR-like"/>
    <property type="match status" value="1"/>
</dbReference>
<dbReference type="PROSITE" id="PS50005">
    <property type="entry name" value="TPR"/>
    <property type="match status" value="1"/>
</dbReference>
<dbReference type="PROSITE" id="PS50293">
    <property type="entry name" value="TPR_REGION"/>
    <property type="match status" value="1"/>
</dbReference>
<reference key="1">
    <citation type="journal article" date="1996" name="Microbiology">
        <title>The dnaB-pheA (256 degrees-240 degrees) region of the Bacillus subtilis chromosome containing genes responsible for stress responses, the utilization of plant cell walls and primary metabolism.</title>
        <authorList>
            <person name="Wipat A."/>
            <person name="Carter N."/>
            <person name="Brignell C.S."/>
            <person name="Guy J.B."/>
            <person name="Piper K."/>
            <person name="Sanders J."/>
            <person name="Emmerson P.T."/>
            <person name="Harwood C.R."/>
        </authorList>
    </citation>
    <scope>NUCLEOTIDE SEQUENCE [GENOMIC DNA]</scope>
    <source>
        <strain>168</strain>
    </source>
</reference>
<reference key="2">
    <citation type="journal article" date="1997" name="Nature">
        <title>The complete genome sequence of the Gram-positive bacterium Bacillus subtilis.</title>
        <authorList>
            <person name="Kunst F."/>
            <person name="Ogasawara N."/>
            <person name="Moszer I."/>
            <person name="Albertini A.M."/>
            <person name="Alloni G."/>
            <person name="Azevedo V."/>
            <person name="Bertero M.G."/>
            <person name="Bessieres P."/>
            <person name="Bolotin A."/>
            <person name="Borchert S."/>
            <person name="Borriss R."/>
            <person name="Boursier L."/>
            <person name="Brans A."/>
            <person name="Braun M."/>
            <person name="Brignell S.C."/>
            <person name="Bron S."/>
            <person name="Brouillet S."/>
            <person name="Bruschi C.V."/>
            <person name="Caldwell B."/>
            <person name="Capuano V."/>
            <person name="Carter N.M."/>
            <person name="Choi S.-K."/>
            <person name="Codani J.-J."/>
            <person name="Connerton I.F."/>
            <person name="Cummings N.J."/>
            <person name="Daniel R.A."/>
            <person name="Denizot F."/>
            <person name="Devine K.M."/>
            <person name="Duesterhoeft A."/>
            <person name="Ehrlich S.D."/>
            <person name="Emmerson P.T."/>
            <person name="Entian K.-D."/>
            <person name="Errington J."/>
            <person name="Fabret C."/>
            <person name="Ferrari E."/>
            <person name="Foulger D."/>
            <person name="Fritz C."/>
            <person name="Fujita M."/>
            <person name="Fujita Y."/>
            <person name="Fuma S."/>
            <person name="Galizzi A."/>
            <person name="Galleron N."/>
            <person name="Ghim S.-Y."/>
            <person name="Glaser P."/>
            <person name="Goffeau A."/>
            <person name="Golightly E.J."/>
            <person name="Grandi G."/>
            <person name="Guiseppi G."/>
            <person name="Guy B.J."/>
            <person name="Haga K."/>
            <person name="Haiech J."/>
            <person name="Harwood C.R."/>
            <person name="Henaut A."/>
            <person name="Hilbert H."/>
            <person name="Holsappel S."/>
            <person name="Hosono S."/>
            <person name="Hullo M.-F."/>
            <person name="Itaya M."/>
            <person name="Jones L.-M."/>
            <person name="Joris B."/>
            <person name="Karamata D."/>
            <person name="Kasahara Y."/>
            <person name="Klaerr-Blanchard M."/>
            <person name="Klein C."/>
            <person name="Kobayashi Y."/>
            <person name="Koetter P."/>
            <person name="Koningstein G."/>
            <person name="Krogh S."/>
            <person name="Kumano M."/>
            <person name="Kurita K."/>
            <person name="Lapidus A."/>
            <person name="Lardinois S."/>
            <person name="Lauber J."/>
            <person name="Lazarevic V."/>
            <person name="Lee S.-M."/>
            <person name="Levine A."/>
            <person name="Liu H."/>
            <person name="Masuda S."/>
            <person name="Mauel C."/>
            <person name="Medigue C."/>
            <person name="Medina N."/>
            <person name="Mellado R.P."/>
            <person name="Mizuno M."/>
            <person name="Moestl D."/>
            <person name="Nakai S."/>
            <person name="Noback M."/>
            <person name="Noone D."/>
            <person name="O'Reilly M."/>
            <person name="Ogawa K."/>
            <person name="Ogiwara A."/>
            <person name="Oudega B."/>
            <person name="Park S.-H."/>
            <person name="Parro V."/>
            <person name="Pohl T.M."/>
            <person name="Portetelle D."/>
            <person name="Porwollik S."/>
            <person name="Prescott A.M."/>
            <person name="Presecan E."/>
            <person name="Pujic P."/>
            <person name="Purnelle B."/>
            <person name="Rapoport G."/>
            <person name="Rey M."/>
            <person name="Reynolds S."/>
            <person name="Rieger M."/>
            <person name="Rivolta C."/>
            <person name="Rocha E."/>
            <person name="Roche B."/>
            <person name="Rose M."/>
            <person name="Sadaie Y."/>
            <person name="Sato T."/>
            <person name="Scanlan E."/>
            <person name="Schleich S."/>
            <person name="Schroeter R."/>
            <person name="Scoffone F."/>
            <person name="Sekiguchi J."/>
            <person name="Sekowska A."/>
            <person name="Seror S.J."/>
            <person name="Serror P."/>
            <person name="Shin B.-S."/>
            <person name="Soldo B."/>
            <person name="Sorokin A."/>
            <person name="Tacconi E."/>
            <person name="Takagi T."/>
            <person name="Takahashi H."/>
            <person name="Takemaru K."/>
            <person name="Takeuchi M."/>
            <person name="Tamakoshi A."/>
            <person name="Tanaka T."/>
            <person name="Terpstra P."/>
            <person name="Tognoni A."/>
            <person name="Tosato V."/>
            <person name="Uchiyama S."/>
            <person name="Vandenbol M."/>
            <person name="Vannier F."/>
            <person name="Vassarotti A."/>
            <person name="Viari A."/>
            <person name="Wambutt R."/>
            <person name="Wedler E."/>
            <person name="Wedler H."/>
            <person name="Weitzenegger T."/>
            <person name="Winters P."/>
            <person name="Wipat A."/>
            <person name="Yamamoto H."/>
            <person name="Yamane K."/>
            <person name="Yasumoto K."/>
            <person name="Yata K."/>
            <person name="Yoshida K."/>
            <person name="Yoshikawa H.-F."/>
            <person name="Zumstein E."/>
            <person name="Yoshikawa H."/>
            <person name="Danchin A."/>
        </authorList>
    </citation>
    <scope>NUCLEOTIDE SEQUENCE [LARGE SCALE GENOMIC DNA]</scope>
    <source>
        <strain>168</strain>
    </source>
</reference>
<reference key="3">
    <citation type="journal article" date="2009" name="Microbiology">
        <title>From a consortium sequence to a unified sequence: the Bacillus subtilis 168 reference genome a decade later.</title>
        <authorList>
            <person name="Barbe V."/>
            <person name="Cruveiller S."/>
            <person name="Kunst F."/>
            <person name="Lenoble P."/>
            <person name="Meurice G."/>
            <person name="Sekowska A."/>
            <person name="Vallenet D."/>
            <person name="Wang T."/>
            <person name="Moszer I."/>
            <person name="Medigue C."/>
            <person name="Danchin A."/>
        </authorList>
    </citation>
    <scope>SEQUENCE REVISION TO 231; 246 AND 256</scope>
</reference>
<protein>
    <recommendedName>
        <fullName>TPR repeat-containing protein YsoA</fullName>
    </recommendedName>
</protein>
<proteinExistence type="predicted"/>
<organism>
    <name type="scientific">Bacillus subtilis (strain 168)</name>
    <dbReference type="NCBI Taxonomy" id="224308"/>
    <lineage>
        <taxon>Bacteria</taxon>
        <taxon>Bacillati</taxon>
        <taxon>Bacillota</taxon>
        <taxon>Bacilli</taxon>
        <taxon>Bacillales</taxon>
        <taxon>Bacillaceae</taxon>
        <taxon>Bacillus</taxon>
    </lineage>
</organism>